<keyword id="KW-0963">Cytoplasm</keyword>
<keyword id="KW-0408">Iron</keyword>
<keyword id="KW-0411">Iron-sulfur</keyword>
<keyword id="KW-0479">Metal-binding</keyword>
<keyword id="KW-0560">Oxidoreductase</keyword>
<feature type="chain" id="PRO_1000092176" description="Adenosine 5'-phosphosulfate reductase">
    <location>
        <begin position="1"/>
        <end position="233"/>
    </location>
</feature>
<feature type="active site" description="Nucleophile; cysteine thiosulfonate intermediate" evidence="1">
    <location>
        <position position="229"/>
    </location>
</feature>
<feature type="binding site" evidence="1">
    <location>
        <position position="120"/>
    </location>
    <ligand>
        <name>[4Fe-4S] cluster</name>
        <dbReference type="ChEBI" id="CHEBI:49883"/>
    </ligand>
</feature>
<feature type="binding site" evidence="1">
    <location>
        <position position="121"/>
    </location>
    <ligand>
        <name>[4Fe-4S] cluster</name>
        <dbReference type="ChEBI" id="CHEBI:49883"/>
    </ligand>
</feature>
<feature type="binding site" evidence="1">
    <location>
        <position position="203"/>
    </location>
    <ligand>
        <name>[4Fe-4S] cluster</name>
        <dbReference type="ChEBI" id="CHEBI:49883"/>
    </ligand>
</feature>
<feature type="binding site" evidence="1">
    <location>
        <position position="206"/>
    </location>
    <ligand>
        <name>[4Fe-4S] cluster</name>
        <dbReference type="ChEBI" id="CHEBI:49883"/>
    </ligand>
</feature>
<gene>
    <name evidence="1" type="primary">cysH</name>
    <name type="ordered locus">Bsph_0598</name>
</gene>
<dbReference type="EC" id="1.8.4.10" evidence="1"/>
<dbReference type="EMBL" id="CP000817">
    <property type="protein sequence ID" value="ACA38221.1"/>
    <property type="molecule type" value="Genomic_DNA"/>
</dbReference>
<dbReference type="RefSeq" id="WP_012292372.1">
    <property type="nucleotide sequence ID" value="NC_010382.1"/>
</dbReference>
<dbReference type="SMR" id="B1HXC6"/>
<dbReference type="EnsemblBacteria" id="ACA38221">
    <property type="protein sequence ID" value="ACA38221"/>
    <property type="gene ID" value="Bsph_0598"/>
</dbReference>
<dbReference type="KEGG" id="lsp:Bsph_0598"/>
<dbReference type="HOGENOM" id="CLU_044089_2_1_9"/>
<dbReference type="Proteomes" id="UP000002164">
    <property type="component" value="Chromosome"/>
</dbReference>
<dbReference type="GO" id="GO:0005737">
    <property type="term" value="C:cytoplasm"/>
    <property type="evidence" value="ECO:0007669"/>
    <property type="project" value="UniProtKB-SubCell"/>
</dbReference>
<dbReference type="GO" id="GO:0051539">
    <property type="term" value="F:4 iron, 4 sulfur cluster binding"/>
    <property type="evidence" value="ECO:0007669"/>
    <property type="project" value="UniProtKB-UniRule"/>
</dbReference>
<dbReference type="GO" id="GO:0043866">
    <property type="term" value="F:adenylyl-sulfate reductase (thioredoxin) activity"/>
    <property type="evidence" value="ECO:0007669"/>
    <property type="project" value="UniProtKB-EC"/>
</dbReference>
<dbReference type="GO" id="GO:0046872">
    <property type="term" value="F:metal ion binding"/>
    <property type="evidence" value="ECO:0007669"/>
    <property type="project" value="UniProtKB-KW"/>
</dbReference>
<dbReference type="GO" id="GO:0004604">
    <property type="term" value="F:phosphoadenylyl-sulfate reductase (thioredoxin) activity"/>
    <property type="evidence" value="ECO:0007669"/>
    <property type="project" value="UniProtKB-UniRule"/>
</dbReference>
<dbReference type="GO" id="GO:0019344">
    <property type="term" value="P:cysteine biosynthetic process"/>
    <property type="evidence" value="ECO:0007669"/>
    <property type="project" value="InterPro"/>
</dbReference>
<dbReference type="GO" id="GO:0070814">
    <property type="term" value="P:hydrogen sulfide biosynthetic process"/>
    <property type="evidence" value="ECO:0007669"/>
    <property type="project" value="UniProtKB-UniRule"/>
</dbReference>
<dbReference type="GO" id="GO:0019379">
    <property type="term" value="P:sulfate assimilation, phosphoadenylyl sulfate reduction by phosphoadenylyl-sulfate reductase (thioredoxin)"/>
    <property type="evidence" value="ECO:0007669"/>
    <property type="project" value="UniProtKB-UniRule"/>
</dbReference>
<dbReference type="CDD" id="cd23945">
    <property type="entry name" value="PAPS_reductase"/>
    <property type="match status" value="1"/>
</dbReference>
<dbReference type="FunFam" id="3.40.50.620:FF:000095">
    <property type="entry name" value="Phosphoadenosine phosphosulfate reductase"/>
    <property type="match status" value="1"/>
</dbReference>
<dbReference type="Gene3D" id="3.40.50.620">
    <property type="entry name" value="HUPs"/>
    <property type="match status" value="1"/>
</dbReference>
<dbReference type="HAMAP" id="MF_00063">
    <property type="entry name" value="CysH"/>
    <property type="match status" value="1"/>
</dbReference>
<dbReference type="InterPro" id="IPR011798">
    <property type="entry name" value="APS_reductase"/>
</dbReference>
<dbReference type="InterPro" id="IPR004511">
    <property type="entry name" value="PAPS/APS_Rdtase"/>
</dbReference>
<dbReference type="InterPro" id="IPR002500">
    <property type="entry name" value="PAPS_reduct_dom"/>
</dbReference>
<dbReference type="InterPro" id="IPR014729">
    <property type="entry name" value="Rossmann-like_a/b/a_fold"/>
</dbReference>
<dbReference type="NCBIfam" id="TIGR02055">
    <property type="entry name" value="APS_reductase"/>
    <property type="match status" value="1"/>
</dbReference>
<dbReference type="NCBIfam" id="TIGR00434">
    <property type="entry name" value="cysH"/>
    <property type="match status" value="1"/>
</dbReference>
<dbReference type="NCBIfam" id="NF002537">
    <property type="entry name" value="PRK02090.1"/>
    <property type="match status" value="1"/>
</dbReference>
<dbReference type="PANTHER" id="PTHR46509">
    <property type="entry name" value="PHOSPHOADENOSINE PHOSPHOSULFATE REDUCTASE"/>
    <property type="match status" value="1"/>
</dbReference>
<dbReference type="PANTHER" id="PTHR46509:SF1">
    <property type="entry name" value="PHOSPHOADENOSINE PHOSPHOSULFATE REDUCTASE"/>
    <property type="match status" value="1"/>
</dbReference>
<dbReference type="Pfam" id="PF01507">
    <property type="entry name" value="PAPS_reduct"/>
    <property type="match status" value="1"/>
</dbReference>
<dbReference type="PIRSF" id="PIRSF000857">
    <property type="entry name" value="PAPS_reductase"/>
    <property type="match status" value="1"/>
</dbReference>
<dbReference type="SUPFAM" id="SSF52402">
    <property type="entry name" value="Adenine nucleotide alpha hydrolases-like"/>
    <property type="match status" value="1"/>
</dbReference>
<name>CYSH_LYSSC</name>
<reference key="1">
    <citation type="journal article" date="2008" name="J. Bacteriol.">
        <title>Complete genome sequence of the mosquitocidal bacterium Bacillus sphaericus C3-41 and comparison with those of closely related Bacillus species.</title>
        <authorList>
            <person name="Hu X."/>
            <person name="Fan W."/>
            <person name="Han B."/>
            <person name="Liu H."/>
            <person name="Zheng D."/>
            <person name="Li Q."/>
            <person name="Dong W."/>
            <person name="Yan J."/>
            <person name="Gao M."/>
            <person name="Berry C."/>
            <person name="Yuan Z."/>
        </authorList>
    </citation>
    <scope>NUCLEOTIDE SEQUENCE [LARGE SCALE GENOMIC DNA]</scope>
    <source>
        <strain>C3-41</strain>
    </source>
</reference>
<comment type="function">
    <text evidence="1">Catalyzes the formation of sulfite from adenosine 5'-phosphosulfate (APS) using thioredoxin as an electron donor.</text>
</comment>
<comment type="catalytic activity">
    <reaction evidence="1">
        <text>[thioredoxin]-disulfide + sulfite + AMP + 2 H(+) = adenosine 5'-phosphosulfate + [thioredoxin]-dithiol</text>
        <dbReference type="Rhea" id="RHEA:21976"/>
        <dbReference type="Rhea" id="RHEA-COMP:10698"/>
        <dbReference type="Rhea" id="RHEA-COMP:10700"/>
        <dbReference type="ChEBI" id="CHEBI:15378"/>
        <dbReference type="ChEBI" id="CHEBI:17359"/>
        <dbReference type="ChEBI" id="CHEBI:29950"/>
        <dbReference type="ChEBI" id="CHEBI:50058"/>
        <dbReference type="ChEBI" id="CHEBI:58243"/>
        <dbReference type="ChEBI" id="CHEBI:456215"/>
        <dbReference type="EC" id="1.8.4.10"/>
    </reaction>
</comment>
<comment type="cofactor">
    <cofactor evidence="1">
        <name>[4Fe-4S] cluster</name>
        <dbReference type="ChEBI" id="CHEBI:49883"/>
    </cofactor>
    <text evidence="1">Binds 1 [4Fe-4S] cluster per subunit.</text>
</comment>
<comment type="pathway">
    <text evidence="1">Sulfur metabolism; hydrogen sulfide biosynthesis; sulfite from sulfate.</text>
</comment>
<comment type="subcellular location">
    <subcellularLocation>
        <location evidence="1">Cytoplasm</location>
    </subcellularLocation>
</comment>
<comment type="similarity">
    <text evidence="1">Belongs to the PAPS reductase family. CysH subfamily.</text>
</comment>
<organism>
    <name type="scientific">Lysinibacillus sphaericus (strain C3-41)</name>
    <dbReference type="NCBI Taxonomy" id="444177"/>
    <lineage>
        <taxon>Bacteria</taxon>
        <taxon>Bacillati</taxon>
        <taxon>Bacillota</taxon>
        <taxon>Bacilli</taxon>
        <taxon>Bacillales</taxon>
        <taxon>Bacillaceae</taxon>
        <taxon>Lysinibacillus</taxon>
    </lineage>
</organism>
<sequence>MLTHANWQEPNINFQVDEMYRGALEVLRWSYQEYGNEIVYACSFGIEGIVLIDLISKVKPNATIVFLDTDVHFKETYETIRRVKEKYPQLNIVMKKSALTLEQQAAQYGEELWKSDPNQCCAIRKIKPLHEALSGTKAWISGLRREQSPTRQQTNFLNRDDKFKSIKVCPLIHWTWKDVWRYVSKNNLPYNPLHDQGYPSIGCEHCTKPAFTMDDLRSGRWQGSGKTECGLHE</sequence>
<accession>B1HXC6</accession>
<protein>
    <recommendedName>
        <fullName evidence="1">Adenosine 5'-phosphosulfate reductase</fullName>
        <shortName evidence="1">APS reductase</shortName>
        <ecNumber evidence="1">1.8.4.10</ecNumber>
    </recommendedName>
    <alternativeName>
        <fullName evidence="1">5'-adenylylsulfate reductase</fullName>
    </alternativeName>
    <alternativeName>
        <fullName evidence="1">Thioredoxin-dependent 5'-adenylylsulfate reductase</fullName>
    </alternativeName>
</protein>
<evidence type="ECO:0000255" key="1">
    <source>
        <dbReference type="HAMAP-Rule" id="MF_00063"/>
    </source>
</evidence>
<proteinExistence type="inferred from homology"/>